<keyword id="KW-1185">Reference proteome</keyword>
<keyword id="KW-0687">Ribonucleoprotein</keyword>
<keyword id="KW-0689">Ribosomal protein</keyword>
<keyword id="KW-0694">RNA-binding</keyword>
<keyword id="KW-0699">rRNA-binding</keyword>
<comment type="function">
    <text evidence="1">One of the primary rRNA binding proteins, it binds directly to 16S rRNA where it helps nucleate assembly of the platform of the 30S subunit by binding and bridging several RNA helices of the 16S rRNA.</text>
</comment>
<comment type="function">
    <text evidence="1">Forms an intersubunit bridge (bridge B4) with the 23S rRNA of the 50S subunit in the ribosome.</text>
</comment>
<comment type="subunit">
    <text evidence="1">Part of the 30S ribosomal subunit. Forms a bridge to the 50S subunit in the 70S ribosome, contacting the 23S rRNA.</text>
</comment>
<comment type="similarity">
    <text evidence="1">Belongs to the universal ribosomal protein uS15 family.</text>
</comment>
<dbReference type="EMBL" id="AE017282">
    <property type="protein sequence ID" value="AAU92669.1"/>
    <property type="molecule type" value="Genomic_DNA"/>
</dbReference>
<dbReference type="RefSeq" id="WP_010960592.1">
    <property type="nucleotide sequence ID" value="NC_002977.6"/>
</dbReference>
<dbReference type="SMR" id="Q609C5"/>
<dbReference type="STRING" id="243233.MCA1310"/>
<dbReference type="GeneID" id="88223593"/>
<dbReference type="KEGG" id="mca:MCA1310"/>
<dbReference type="eggNOG" id="COG0184">
    <property type="taxonomic scope" value="Bacteria"/>
</dbReference>
<dbReference type="HOGENOM" id="CLU_148518_0_0_6"/>
<dbReference type="Proteomes" id="UP000006821">
    <property type="component" value="Chromosome"/>
</dbReference>
<dbReference type="GO" id="GO:0022627">
    <property type="term" value="C:cytosolic small ribosomal subunit"/>
    <property type="evidence" value="ECO:0007669"/>
    <property type="project" value="TreeGrafter"/>
</dbReference>
<dbReference type="GO" id="GO:0019843">
    <property type="term" value="F:rRNA binding"/>
    <property type="evidence" value="ECO:0007669"/>
    <property type="project" value="UniProtKB-UniRule"/>
</dbReference>
<dbReference type="GO" id="GO:0003735">
    <property type="term" value="F:structural constituent of ribosome"/>
    <property type="evidence" value="ECO:0007669"/>
    <property type="project" value="InterPro"/>
</dbReference>
<dbReference type="GO" id="GO:0006412">
    <property type="term" value="P:translation"/>
    <property type="evidence" value="ECO:0007669"/>
    <property type="project" value="UniProtKB-UniRule"/>
</dbReference>
<dbReference type="CDD" id="cd00353">
    <property type="entry name" value="Ribosomal_S15p_S13e"/>
    <property type="match status" value="1"/>
</dbReference>
<dbReference type="FunFam" id="1.10.287.10:FF:000002">
    <property type="entry name" value="30S ribosomal protein S15"/>
    <property type="match status" value="1"/>
</dbReference>
<dbReference type="Gene3D" id="6.10.250.3130">
    <property type="match status" value="1"/>
</dbReference>
<dbReference type="Gene3D" id="1.10.287.10">
    <property type="entry name" value="S15/NS1, RNA-binding"/>
    <property type="match status" value="1"/>
</dbReference>
<dbReference type="HAMAP" id="MF_01343_B">
    <property type="entry name" value="Ribosomal_uS15_B"/>
    <property type="match status" value="1"/>
</dbReference>
<dbReference type="InterPro" id="IPR000589">
    <property type="entry name" value="Ribosomal_uS15"/>
</dbReference>
<dbReference type="InterPro" id="IPR005290">
    <property type="entry name" value="Ribosomal_uS15_bac-type"/>
</dbReference>
<dbReference type="InterPro" id="IPR009068">
    <property type="entry name" value="uS15_NS1_RNA-bd_sf"/>
</dbReference>
<dbReference type="NCBIfam" id="TIGR00952">
    <property type="entry name" value="S15_bact"/>
    <property type="match status" value="1"/>
</dbReference>
<dbReference type="PANTHER" id="PTHR23321">
    <property type="entry name" value="RIBOSOMAL PROTEIN S15, BACTERIAL AND ORGANELLAR"/>
    <property type="match status" value="1"/>
</dbReference>
<dbReference type="PANTHER" id="PTHR23321:SF26">
    <property type="entry name" value="SMALL RIBOSOMAL SUBUNIT PROTEIN US15M"/>
    <property type="match status" value="1"/>
</dbReference>
<dbReference type="Pfam" id="PF00312">
    <property type="entry name" value="Ribosomal_S15"/>
    <property type="match status" value="1"/>
</dbReference>
<dbReference type="SMART" id="SM01387">
    <property type="entry name" value="Ribosomal_S15"/>
    <property type="match status" value="1"/>
</dbReference>
<dbReference type="SUPFAM" id="SSF47060">
    <property type="entry name" value="S15/NS1 RNA-binding domain"/>
    <property type="match status" value="1"/>
</dbReference>
<dbReference type="PROSITE" id="PS00362">
    <property type="entry name" value="RIBOSOMAL_S15"/>
    <property type="match status" value="1"/>
</dbReference>
<proteinExistence type="inferred from homology"/>
<reference key="1">
    <citation type="journal article" date="2004" name="PLoS Biol.">
        <title>Genomic insights into methanotrophy: the complete genome sequence of Methylococcus capsulatus (Bath).</title>
        <authorList>
            <person name="Ward N.L."/>
            <person name="Larsen O."/>
            <person name="Sakwa J."/>
            <person name="Bruseth L."/>
            <person name="Khouri H.M."/>
            <person name="Durkin A.S."/>
            <person name="Dimitrov G."/>
            <person name="Jiang L."/>
            <person name="Scanlan D."/>
            <person name="Kang K.H."/>
            <person name="Lewis M.R."/>
            <person name="Nelson K.E."/>
            <person name="Methe B.A."/>
            <person name="Wu M."/>
            <person name="Heidelberg J.F."/>
            <person name="Paulsen I.T."/>
            <person name="Fouts D.E."/>
            <person name="Ravel J."/>
            <person name="Tettelin H."/>
            <person name="Ren Q."/>
            <person name="Read T.D."/>
            <person name="DeBoy R.T."/>
            <person name="Seshadri R."/>
            <person name="Salzberg S.L."/>
            <person name="Jensen H.B."/>
            <person name="Birkeland N.K."/>
            <person name="Nelson W.C."/>
            <person name="Dodson R.J."/>
            <person name="Grindhaug S.H."/>
            <person name="Holt I.E."/>
            <person name="Eidhammer I."/>
            <person name="Jonasen I."/>
            <person name="Vanaken S."/>
            <person name="Utterback T.R."/>
            <person name="Feldblyum T.V."/>
            <person name="Fraser C.M."/>
            <person name="Lillehaug J.R."/>
            <person name="Eisen J.A."/>
        </authorList>
    </citation>
    <scope>NUCLEOTIDE SEQUENCE [LARGE SCALE GENOMIC DNA]</scope>
    <source>
        <strain>ATCC 33009 / NCIMB 11132 / Bath</strain>
    </source>
</reference>
<sequence length="89" mass="10478">MAFTAAEKSVIVQEFQRAPGDTGSPEVQVALLTNRINYLTPHFVKHKKDFHSRRGLLRLVNQRRKLLDYLKNTDNERYRTLIERLGLRK</sequence>
<gene>
    <name evidence="1" type="primary">rpsO</name>
    <name type="ordered locus">MCA1310</name>
</gene>
<name>RS15_METCA</name>
<accession>Q609C5</accession>
<protein>
    <recommendedName>
        <fullName evidence="1">Small ribosomal subunit protein uS15</fullName>
    </recommendedName>
    <alternativeName>
        <fullName evidence="2">30S ribosomal protein S15</fullName>
    </alternativeName>
</protein>
<feature type="chain" id="PRO_0000115469" description="Small ribosomal subunit protein uS15">
    <location>
        <begin position="1"/>
        <end position="89"/>
    </location>
</feature>
<organism>
    <name type="scientific">Methylococcus capsulatus (strain ATCC 33009 / NCIMB 11132 / Bath)</name>
    <dbReference type="NCBI Taxonomy" id="243233"/>
    <lineage>
        <taxon>Bacteria</taxon>
        <taxon>Pseudomonadati</taxon>
        <taxon>Pseudomonadota</taxon>
        <taxon>Gammaproteobacteria</taxon>
        <taxon>Methylococcales</taxon>
        <taxon>Methylococcaceae</taxon>
        <taxon>Methylococcus</taxon>
    </lineage>
</organism>
<evidence type="ECO:0000255" key="1">
    <source>
        <dbReference type="HAMAP-Rule" id="MF_01343"/>
    </source>
</evidence>
<evidence type="ECO:0000305" key="2"/>